<dbReference type="EC" id="3.6.-.-" evidence="2"/>
<dbReference type="EC" id="2.7.11.1" evidence="1"/>
<dbReference type="EMBL" id="CU329670">
    <property type="protein sequence ID" value="CAB76028.1"/>
    <property type="molecule type" value="Genomic_DNA"/>
</dbReference>
<dbReference type="SMR" id="Q9P7N1"/>
<dbReference type="BioGRID" id="278440">
    <property type="interactions" value="6"/>
</dbReference>
<dbReference type="FunCoup" id="Q9P7N1">
    <property type="interactions" value="313"/>
</dbReference>
<dbReference type="STRING" id="284812.Q9P7N1"/>
<dbReference type="iPTMnet" id="Q9P7N1"/>
<dbReference type="PaxDb" id="4896-SPAP27G11.07c.1"/>
<dbReference type="EnsemblFungi" id="SPAP27G11.07c.1">
    <property type="protein sequence ID" value="SPAP27G11.07c.1:pep"/>
    <property type="gene ID" value="SPAP27G11.07c"/>
</dbReference>
<dbReference type="KEGG" id="spo:2541953"/>
<dbReference type="PomBase" id="SPAP27G11.07c"/>
<dbReference type="VEuPathDB" id="FungiDB:SPAP27G11.07c"/>
<dbReference type="eggNOG" id="KOG3087">
    <property type="taxonomic scope" value="Eukaryota"/>
</dbReference>
<dbReference type="HOGENOM" id="CLU_063953_0_0_1"/>
<dbReference type="InParanoid" id="Q9P7N1"/>
<dbReference type="OMA" id="HKLYMEY"/>
<dbReference type="PhylomeDB" id="Q9P7N1"/>
<dbReference type="PRO" id="PR:Q9P7N1"/>
<dbReference type="Proteomes" id="UP000002485">
    <property type="component" value="Chromosome I"/>
</dbReference>
<dbReference type="GO" id="GO:0000781">
    <property type="term" value="C:chromosome, telomeric region"/>
    <property type="evidence" value="ECO:0007669"/>
    <property type="project" value="UniProtKB-SubCell"/>
</dbReference>
<dbReference type="GO" id="GO:0005829">
    <property type="term" value="C:cytosol"/>
    <property type="evidence" value="ECO:0007005"/>
    <property type="project" value="PomBase"/>
</dbReference>
<dbReference type="GO" id="GO:0000408">
    <property type="term" value="C:EKC/KEOPS complex"/>
    <property type="evidence" value="ECO:0000318"/>
    <property type="project" value="GO_Central"/>
</dbReference>
<dbReference type="GO" id="GO:0005634">
    <property type="term" value="C:nucleus"/>
    <property type="evidence" value="ECO:0007005"/>
    <property type="project" value="PomBase"/>
</dbReference>
<dbReference type="GO" id="GO:0005524">
    <property type="term" value="F:ATP binding"/>
    <property type="evidence" value="ECO:0000255"/>
    <property type="project" value="PomBase"/>
</dbReference>
<dbReference type="GO" id="GO:0016887">
    <property type="term" value="F:ATP hydrolysis activity"/>
    <property type="evidence" value="ECO:0000266"/>
    <property type="project" value="PomBase"/>
</dbReference>
<dbReference type="GO" id="GO:0106310">
    <property type="term" value="F:protein serine kinase activity"/>
    <property type="evidence" value="ECO:0007669"/>
    <property type="project" value="RHEA"/>
</dbReference>
<dbReference type="GO" id="GO:0004674">
    <property type="term" value="F:protein serine/threonine kinase activity"/>
    <property type="evidence" value="ECO:0000318"/>
    <property type="project" value="GO_Central"/>
</dbReference>
<dbReference type="GO" id="GO:0070525">
    <property type="term" value="P:tRNA threonylcarbamoyladenosine metabolic process"/>
    <property type="evidence" value="ECO:0000318"/>
    <property type="project" value="GO_Central"/>
</dbReference>
<dbReference type="GO" id="GO:0002949">
    <property type="term" value="P:tRNA threonylcarbamoyladenosine modification"/>
    <property type="evidence" value="ECO:0000266"/>
    <property type="project" value="PomBase"/>
</dbReference>
<dbReference type="FunFam" id="3.30.200.20:FF:000201">
    <property type="entry name" value="TP53-regulating kinase isoform X1"/>
    <property type="match status" value="1"/>
</dbReference>
<dbReference type="FunFam" id="1.10.510.10:FF:000323">
    <property type="entry name" value="TP53-regulating kinase, putative"/>
    <property type="match status" value="1"/>
</dbReference>
<dbReference type="Gene3D" id="3.30.200.20">
    <property type="entry name" value="Phosphorylase Kinase, domain 1"/>
    <property type="match status" value="1"/>
</dbReference>
<dbReference type="Gene3D" id="1.10.510.10">
    <property type="entry name" value="Transferase(Phosphotransferase) domain 1"/>
    <property type="match status" value="1"/>
</dbReference>
<dbReference type="InterPro" id="IPR022495">
    <property type="entry name" value="Bud32"/>
</dbReference>
<dbReference type="InterPro" id="IPR011009">
    <property type="entry name" value="Kinase-like_dom_sf"/>
</dbReference>
<dbReference type="InterPro" id="IPR000719">
    <property type="entry name" value="Prot_kinase_dom"/>
</dbReference>
<dbReference type="InterPro" id="IPR008266">
    <property type="entry name" value="Tyr_kinase_AS"/>
</dbReference>
<dbReference type="NCBIfam" id="TIGR03724">
    <property type="entry name" value="arch_bud32"/>
    <property type="match status" value="1"/>
</dbReference>
<dbReference type="PANTHER" id="PTHR12209:SF0">
    <property type="entry name" value="EKC_KEOPS COMPLEX SUBUNIT TP53RK"/>
    <property type="match status" value="1"/>
</dbReference>
<dbReference type="PANTHER" id="PTHR12209">
    <property type="entry name" value="NON-SPECIFIC SERINE/THREONINE PROTEIN KINASE"/>
    <property type="match status" value="1"/>
</dbReference>
<dbReference type="Pfam" id="PF00069">
    <property type="entry name" value="Pkinase"/>
    <property type="match status" value="1"/>
</dbReference>
<dbReference type="SMART" id="SM00220">
    <property type="entry name" value="S_TKc"/>
    <property type="match status" value="1"/>
</dbReference>
<dbReference type="SUPFAM" id="SSF56112">
    <property type="entry name" value="Protein kinase-like (PK-like)"/>
    <property type="match status" value="1"/>
</dbReference>
<dbReference type="PROSITE" id="PS50011">
    <property type="entry name" value="PROTEIN_KINASE_DOM"/>
    <property type="match status" value="1"/>
</dbReference>
<dbReference type="PROSITE" id="PS00109">
    <property type="entry name" value="PROTEIN_KINASE_TYR"/>
    <property type="match status" value="1"/>
</dbReference>
<keyword id="KW-0010">Activator</keyword>
<keyword id="KW-0067">ATP-binding</keyword>
<keyword id="KW-0158">Chromosome</keyword>
<keyword id="KW-0963">Cytoplasm</keyword>
<keyword id="KW-0378">Hydrolase</keyword>
<keyword id="KW-0418">Kinase</keyword>
<keyword id="KW-0547">Nucleotide-binding</keyword>
<keyword id="KW-0539">Nucleus</keyword>
<keyword id="KW-0597">Phosphoprotein</keyword>
<keyword id="KW-1185">Reference proteome</keyword>
<keyword id="KW-0723">Serine/threonine-protein kinase</keyword>
<keyword id="KW-0779">Telomere</keyword>
<keyword id="KW-0804">Transcription</keyword>
<keyword id="KW-0805">Transcription regulation</keyword>
<keyword id="KW-0808">Transferase</keyword>
<keyword id="KW-0819">tRNA processing</keyword>
<proteinExistence type="inferred from homology"/>
<sequence length="238" mass="27707">MSEKPDLRQRCSDIYREIKEKKLTVVKQGAEAITIKTEFYPGEVCLLKCRPAKRWRHPILDQKLSRKRCLVEARLLAKCHYVGIKCPMLYFIDANRGQIYMEWIDGPCVRDYIREICECEIEKKLIPLMKRIGSEVAKMHKNDIVHGDLTTSNMMLESHNNPVPIFIDFGLGSVSESEEDKAVDIYVLERALSSTLPESESLFHHVLDSYAQSWKQSKATLRRFEEVRMRGRKRTMIG</sequence>
<accession>Q9P7N1</accession>
<name>BUD32_SCHPO</name>
<comment type="function">
    <text evidence="1">Component of the EKC/KEOPS complex that is required for the formation of a threonylcarbamoyl group on adenosine at position 37 (t(6)A37) in tRNAs that read codons beginning with adenine. The complex is probably involved in the transfer of the threonylcarbamoyl moiety of threonylcarbamoyl-AMP (TC-AMP) to the N6 group of A37. BUD32 has ATPase activity in the context of the EKC/KEOPS complex and likely plays a supporting role to the catalytic subunit KAE1. The EKC/KEOPS complex also promotes both telomere uncapping and telomere elongation. The complex is required for efficient recruitment of transcriptional coactivators.</text>
</comment>
<comment type="catalytic activity">
    <reaction evidence="1">
        <text>L-seryl-[protein] + ATP = O-phospho-L-seryl-[protein] + ADP + H(+)</text>
        <dbReference type="Rhea" id="RHEA:17989"/>
        <dbReference type="Rhea" id="RHEA-COMP:9863"/>
        <dbReference type="Rhea" id="RHEA-COMP:11604"/>
        <dbReference type="ChEBI" id="CHEBI:15378"/>
        <dbReference type="ChEBI" id="CHEBI:29999"/>
        <dbReference type="ChEBI" id="CHEBI:30616"/>
        <dbReference type="ChEBI" id="CHEBI:83421"/>
        <dbReference type="ChEBI" id="CHEBI:456216"/>
        <dbReference type="EC" id="2.7.11.1"/>
    </reaction>
</comment>
<comment type="catalytic activity">
    <reaction evidence="1">
        <text>L-threonyl-[protein] + ATP = O-phospho-L-threonyl-[protein] + ADP + H(+)</text>
        <dbReference type="Rhea" id="RHEA:46608"/>
        <dbReference type="Rhea" id="RHEA-COMP:11060"/>
        <dbReference type="Rhea" id="RHEA-COMP:11605"/>
        <dbReference type="ChEBI" id="CHEBI:15378"/>
        <dbReference type="ChEBI" id="CHEBI:30013"/>
        <dbReference type="ChEBI" id="CHEBI:30616"/>
        <dbReference type="ChEBI" id="CHEBI:61977"/>
        <dbReference type="ChEBI" id="CHEBI:456216"/>
        <dbReference type="EC" id="2.7.11.1"/>
    </reaction>
</comment>
<comment type="subunit">
    <text evidence="1">Component of the EKC/KEOPS complex composed of at least SPAP27G11.07c/BUD32, cgi121, gon7, pgp2 and SPAC4H3.13/PCC1; the whole complex dimerizes.</text>
</comment>
<comment type="subcellular location">
    <subcellularLocation>
        <location evidence="1">Cytoplasm</location>
    </subcellularLocation>
    <subcellularLocation>
        <location evidence="1">Nucleus</location>
    </subcellularLocation>
    <subcellularLocation>
        <location evidence="1">Chromosome</location>
        <location evidence="1">Telomere</location>
    </subcellularLocation>
</comment>
<comment type="domain">
    <text evidence="1 2">This protein is considered an atypical serine/threonine kinase, because it lacks the conventional structural elements necessary for the substrate recognition as well as a lysine residue that in all other serine/threonine kinases participates in the catalytic event (By similarity). BUD32 has protein kinase activity in vitro, but in the context of the EKC/KEOPS complex, the catalytic subunit KAE1 switches the activity of BUD32 from kinase into ATPase (By similarity).</text>
</comment>
<comment type="similarity">
    <text evidence="5">Belongs to the protein kinase superfamily. BUD32 family.</text>
</comment>
<evidence type="ECO:0000250" key="1">
    <source>
        <dbReference type="UniProtKB" id="P53323"/>
    </source>
</evidence>
<evidence type="ECO:0000250" key="2">
    <source>
        <dbReference type="UniProtKB" id="Q9UYB9"/>
    </source>
</evidence>
<evidence type="ECO:0000255" key="3">
    <source>
        <dbReference type="PROSITE-ProRule" id="PRU00159"/>
    </source>
</evidence>
<evidence type="ECO:0000255" key="4">
    <source>
        <dbReference type="PROSITE-ProRule" id="PRU10028"/>
    </source>
</evidence>
<evidence type="ECO:0000305" key="5"/>
<organism>
    <name type="scientific">Schizosaccharomyces pombe (strain 972 / ATCC 24843)</name>
    <name type="common">Fission yeast</name>
    <dbReference type="NCBI Taxonomy" id="284812"/>
    <lineage>
        <taxon>Eukaryota</taxon>
        <taxon>Fungi</taxon>
        <taxon>Dikarya</taxon>
        <taxon>Ascomycota</taxon>
        <taxon>Taphrinomycotina</taxon>
        <taxon>Schizosaccharomycetes</taxon>
        <taxon>Schizosaccharomycetales</taxon>
        <taxon>Schizosaccharomycetaceae</taxon>
        <taxon>Schizosaccharomyces</taxon>
    </lineage>
</organism>
<feature type="chain" id="PRO_0000278917" description="EKC/KEOPS complex subunit SPAP27G11.07c">
    <location>
        <begin position="1"/>
        <end position="238"/>
    </location>
</feature>
<feature type="domain" description="Protein kinase" evidence="3">
    <location>
        <begin position="20"/>
        <end position="238"/>
    </location>
</feature>
<feature type="active site" description="Proton acceptor" evidence="3 4">
    <location>
        <position position="148"/>
    </location>
</feature>
<feature type="binding site" evidence="3">
    <location>
        <begin position="26"/>
        <end position="34"/>
    </location>
    <ligand>
        <name>ATP</name>
        <dbReference type="ChEBI" id="CHEBI:30616"/>
    </ligand>
</feature>
<feature type="binding site" evidence="3">
    <location>
        <position position="48"/>
    </location>
    <ligand>
        <name>ATP</name>
        <dbReference type="ChEBI" id="CHEBI:30616"/>
    </ligand>
</feature>
<gene>
    <name type="ORF">SPAP27G11.07c</name>
</gene>
<protein>
    <recommendedName>
        <fullName>EKC/KEOPS complex subunit SPAP27G11.07c</fullName>
        <ecNumber evidence="2">3.6.-.-</ecNumber>
    </recommendedName>
    <alternativeName>
        <fullName>Atypical serine/threonine protein kinase BUD32 homolog</fullName>
        <ecNumber evidence="1">2.7.11.1</ecNumber>
    </alternativeName>
</protein>
<reference key="1">
    <citation type="journal article" date="2002" name="Nature">
        <title>The genome sequence of Schizosaccharomyces pombe.</title>
        <authorList>
            <person name="Wood V."/>
            <person name="Gwilliam R."/>
            <person name="Rajandream M.A."/>
            <person name="Lyne M.H."/>
            <person name="Lyne R."/>
            <person name="Stewart A."/>
            <person name="Sgouros J.G."/>
            <person name="Peat N."/>
            <person name="Hayles J."/>
            <person name="Baker S.G."/>
            <person name="Basham D."/>
            <person name="Bowman S."/>
            <person name="Brooks K."/>
            <person name="Brown D."/>
            <person name="Brown S."/>
            <person name="Chillingworth T."/>
            <person name="Churcher C.M."/>
            <person name="Collins M."/>
            <person name="Connor R."/>
            <person name="Cronin A."/>
            <person name="Davis P."/>
            <person name="Feltwell T."/>
            <person name="Fraser A."/>
            <person name="Gentles S."/>
            <person name="Goble A."/>
            <person name="Hamlin N."/>
            <person name="Harris D.E."/>
            <person name="Hidalgo J."/>
            <person name="Hodgson G."/>
            <person name="Holroyd S."/>
            <person name="Hornsby T."/>
            <person name="Howarth S."/>
            <person name="Huckle E.J."/>
            <person name="Hunt S."/>
            <person name="Jagels K."/>
            <person name="James K.D."/>
            <person name="Jones L."/>
            <person name="Jones M."/>
            <person name="Leather S."/>
            <person name="McDonald S."/>
            <person name="McLean J."/>
            <person name="Mooney P."/>
            <person name="Moule S."/>
            <person name="Mungall K.L."/>
            <person name="Murphy L.D."/>
            <person name="Niblett D."/>
            <person name="Odell C."/>
            <person name="Oliver K."/>
            <person name="O'Neil S."/>
            <person name="Pearson D."/>
            <person name="Quail M.A."/>
            <person name="Rabbinowitsch E."/>
            <person name="Rutherford K.M."/>
            <person name="Rutter S."/>
            <person name="Saunders D."/>
            <person name="Seeger K."/>
            <person name="Sharp S."/>
            <person name="Skelton J."/>
            <person name="Simmonds M.N."/>
            <person name="Squares R."/>
            <person name="Squares S."/>
            <person name="Stevens K."/>
            <person name="Taylor K."/>
            <person name="Taylor R.G."/>
            <person name="Tivey A."/>
            <person name="Walsh S.V."/>
            <person name="Warren T."/>
            <person name="Whitehead S."/>
            <person name="Woodward J.R."/>
            <person name="Volckaert G."/>
            <person name="Aert R."/>
            <person name="Robben J."/>
            <person name="Grymonprez B."/>
            <person name="Weltjens I."/>
            <person name="Vanstreels E."/>
            <person name="Rieger M."/>
            <person name="Schaefer M."/>
            <person name="Mueller-Auer S."/>
            <person name="Gabel C."/>
            <person name="Fuchs M."/>
            <person name="Duesterhoeft A."/>
            <person name="Fritzc C."/>
            <person name="Holzer E."/>
            <person name="Moestl D."/>
            <person name="Hilbert H."/>
            <person name="Borzym K."/>
            <person name="Langer I."/>
            <person name="Beck A."/>
            <person name="Lehrach H."/>
            <person name="Reinhardt R."/>
            <person name="Pohl T.M."/>
            <person name="Eger P."/>
            <person name="Zimmermann W."/>
            <person name="Wedler H."/>
            <person name="Wambutt R."/>
            <person name="Purnelle B."/>
            <person name="Goffeau A."/>
            <person name="Cadieu E."/>
            <person name="Dreano S."/>
            <person name="Gloux S."/>
            <person name="Lelaure V."/>
            <person name="Mottier S."/>
            <person name="Galibert F."/>
            <person name="Aves S.J."/>
            <person name="Xiang Z."/>
            <person name="Hunt C."/>
            <person name="Moore K."/>
            <person name="Hurst S.M."/>
            <person name="Lucas M."/>
            <person name="Rochet M."/>
            <person name="Gaillardin C."/>
            <person name="Tallada V.A."/>
            <person name="Garzon A."/>
            <person name="Thode G."/>
            <person name="Daga R.R."/>
            <person name="Cruzado L."/>
            <person name="Jimenez J."/>
            <person name="Sanchez M."/>
            <person name="del Rey F."/>
            <person name="Benito J."/>
            <person name="Dominguez A."/>
            <person name="Revuelta J.L."/>
            <person name="Moreno S."/>
            <person name="Armstrong J."/>
            <person name="Forsburg S.L."/>
            <person name="Cerutti L."/>
            <person name="Lowe T."/>
            <person name="McCombie W.R."/>
            <person name="Paulsen I."/>
            <person name="Potashkin J."/>
            <person name="Shpakovski G.V."/>
            <person name="Ussery D."/>
            <person name="Barrell B.G."/>
            <person name="Nurse P."/>
        </authorList>
    </citation>
    <scope>NUCLEOTIDE SEQUENCE [LARGE SCALE GENOMIC DNA]</scope>
    <source>
        <strain>972 / ATCC 24843</strain>
    </source>
</reference>